<reference key="1">
    <citation type="journal article" date="2008" name="Proc. Natl. Acad. Sci. U.S.A.">
        <title>Niche adaptation and genome expansion in the chlorophyll d-producing cyanobacterium Acaryochloris marina.</title>
        <authorList>
            <person name="Swingley W.D."/>
            <person name="Chen M."/>
            <person name="Cheung P.C."/>
            <person name="Conrad A.L."/>
            <person name="Dejesa L.C."/>
            <person name="Hao J."/>
            <person name="Honchak B.M."/>
            <person name="Karbach L.E."/>
            <person name="Kurdoglu A."/>
            <person name="Lahiri S."/>
            <person name="Mastrian S.D."/>
            <person name="Miyashita H."/>
            <person name="Page L."/>
            <person name="Ramakrishna P."/>
            <person name="Satoh S."/>
            <person name="Sattley W.M."/>
            <person name="Shimada Y."/>
            <person name="Taylor H.L."/>
            <person name="Tomo T."/>
            <person name="Tsuchiya T."/>
            <person name="Wang Z.T."/>
            <person name="Raymond J."/>
            <person name="Mimuro M."/>
            <person name="Blankenship R.E."/>
            <person name="Touchman J.W."/>
        </authorList>
    </citation>
    <scope>NUCLEOTIDE SEQUENCE [LARGE SCALE GENOMIC DNA]</scope>
    <source>
        <strain>MBIC 11017</strain>
    </source>
</reference>
<comment type="function">
    <text evidence="1">One of two assembly initiator proteins, it binds directly to the 5'-end of the 23S rRNA, where it nucleates assembly of the 50S subunit.</text>
</comment>
<comment type="function">
    <text evidence="1">One of the proteins that surrounds the polypeptide exit tunnel on the outside of the subunit.</text>
</comment>
<comment type="subunit">
    <text evidence="1">Part of the 50S ribosomal subunit.</text>
</comment>
<comment type="similarity">
    <text evidence="1">Belongs to the universal ribosomal protein uL24 family.</text>
</comment>
<gene>
    <name evidence="1" type="primary">rplX</name>
    <name evidence="1" type="synonym">rpl24</name>
    <name type="ordered locus">AM1_4707</name>
</gene>
<accession>B0C1E4</accession>
<name>RL24_ACAM1</name>
<dbReference type="EMBL" id="CP000828">
    <property type="protein sequence ID" value="ABW29679.1"/>
    <property type="molecule type" value="Genomic_DNA"/>
</dbReference>
<dbReference type="RefSeq" id="WP_012164969.1">
    <property type="nucleotide sequence ID" value="NC_009925.1"/>
</dbReference>
<dbReference type="SMR" id="B0C1E4"/>
<dbReference type="STRING" id="329726.AM1_4707"/>
<dbReference type="KEGG" id="amr:AM1_4707"/>
<dbReference type="eggNOG" id="COG0198">
    <property type="taxonomic scope" value="Bacteria"/>
</dbReference>
<dbReference type="HOGENOM" id="CLU_093315_2_3_3"/>
<dbReference type="OrthoDB" id="9807419at2"/>
<dbReference type="Proteomes" id="UP000000268">
    <property type="component" value="Chromosome"/>
</dbReference>
<dbReference type="GO" id="GO:1990904">
    <property type="term" value="C:ribonucleoprotein complex"/>
    <property type="evidence" value="ECO:0007669"/>
    <property type="project" value="UniProtKB-KW"/>
</dbReference>
<dbReference type="GO" id="GO:0005840">
    <property type="term" value="C:ribosome"/>
    <property type="evidence" value="ECO:0007669"/>
    <property type="project" value="UniProtKB-KW"/>
</dbReference>
<dbReference type="GO" id="GO:0019843">
    <property type="term" value="F:rRNA binding"/>
    <property type="evidence" value="ECO:0007669"/>
    <property type="project" value="UniProtKB-UniRule"/>
</dbReference>
<dbReference type="GO" id="GO:0003735">
    <property type="term" value="F:structural constituent of ribosome"/>
    <property type="evidence" value="ECO:0007669"/>
    <property type="project" value="InterPro"/>
</dbReference>
<dbReference type="GO" id="GO:0006412">
    <property type="term" value="P:translation"/>
    <property type="evidence" value="ECO:0007669"/>
    <property type="project" value="UniProtKB-UniRule"/>
</dbReference>
<dbReference type="CDD" id="cd06089">
    <property type="entry name" value="KOW_RPL26"/>
    <property type="match status" value="1"/>
</dbReference>
<dbReference type="FunFam" id="2.30.30.30:FF:000004">
    <property type="entry name" value="50S ribosomal protein L24"/>
    <property type="match status" value="1"/>
</dbReference>
<dbReference type="Gene3D" id="2.30.30.30">
    <property type="match status" value="1"/>
</dbReference>
<dbReference type="HAMAP" id="MF_01326_B">
    <property type="entry name" value="Ribosomal_uL24_B"/>
    <property type="match status" value="1"/>
</dbReference>
<dbReference type="InterPro" id="IPR005824">
    <property type="entry name" value="KOW"/>
</dbReference>
<dbReference type="InterPro" id="IPR014722">
    <property type="entry name" value="Rib_uL2_dom2"/>
</dbReference>
<dbReference type="InterPro" id="IPR003256">
    <property type="entry name" value="Ribosomal_uL24"/>
</dbReference>
<dbReference type="InterPro" id="IPR041988">
    <property type="entry name" value="Ribosomal_uL24_KOW"/>
</dbReference>
<dbReference type="InterPro" id="IPR008991">
    <property type="entry name" value="Translation_prot_SH3-like_sf"/>
</dbReference>
<dbReference type="NCBIfam" id="TIGR01079">
    <property type="entry name" value="rplX_bact"/>
    <property type="match status" value="1"/>
</dbReference>
<dbReference type="PANTHER" id="PTHR12903">
    <property type="entry name" value="MITOCHONDRIAL RIBOSOMAL PROTEIN L24"/>
    <property type="match status" value="1"/>
</dbReference>
<dbReference type="Pfam" id="PF00467">
    <property type="entry name" value="KOW"/>
    <property type="match status" value="1"/>
</dbReference>
<dbReference type="Pfam" id="PF17136">
    <property type="entry name" value="ribosomal_L24"/>
    <property type="match status" value="1"/>
</dbReference>
<dbReference type="SMART" id="SM00739">
    <property type="entry name" value="KOW"/>
    <property type="match status" value="1"/>
</dbReference>
<dbReference type="SUPFAM" id="SSF50104">
    <property type="entry name" value="Translation proteins SH3-like domain"/>
    <property type="match status" value="1"/>
</dbReference>
<proteinExistence type="inferred from homology"/>
<feature type="chain" id="PRO_0000355640" description="Large ribosomal subunit protein uL24">
    <location>
        <begin position="1"/>
        <end position="115"/>
    </location>
</feature>
<organism>
    <name type="scientific">Acaryochloris marina (strain MBIC 11017)</name>
    <dbReference type="NCBI Taxonomy" id="329726"/>
    <lineage>
        <taxon>Bacteria</taxon>
        <taxon>Bacillati</taxon>
        <taxon>Cyanobacteriota</taxon>
        <taxon>Cyanophyceae</taxon>
        <taxon>Acaryochloridales</taxon>
        <taxon>Acaryochloridaceae</taxon>
        <taxon>Acaryochloris</taxon>
    </lineage>
</organism>
<protein>
    <recommendedName>
        <fullName evidence="1">Large ribosomal subunit protein uL24</fullName>
    </recommendedName>
    <alternativeName>
        <fullName evidence="2">50S ribosomal protein L24</fullName>
    </alternativeName>
</protein>
<sequence>MAKKKSTAKRYKMHVKKGDTVQVIAGKDKAKVGEVIDVLPKLSQVVVEGVNMKTKHVKPRSESESGQISTVEFPIHSSNVMLYSNKENVASRVCYTFDDSGRKVRMLKKTGEIID</sequence>
<keyword id="KW-1185">Reference proteome</keyword>
<keyword id="KW-0687">Ribonucleoprotein</keyword>
<keyword id="KW-0689">Ribosomal protein</keyword>
<keyword id="KW-0694">RNA-binding</keyword>
<keyword id="KW-0699">rRNA-binding</keyword>
<evidence type="ECO:0000255" key="1">
    <source>
        <dbReference type="HAMAP-Rule" id="MF_01326"/>
    </source>
</evidence>
<evidence type="ECO:0000305" key="2"/>